<dbReference type="EC" id="6.3.4.4" evidence="1"/>
<dbReference type="EMBL" id="BA000036">
    <property type="protein sequence ID" value="BAC00160.1"/>
    <property type="molecule type" value="Genomic_DNA"/>
</dbReference>
<dbReference type="EMBL" id="BX927156">
    <property type="protein sequence ID" value="CAF20787.1"/>
    <property type="molecule type" value="Genomic_DNA"/>
</dbReference>
<dbReference type="RefSeq" id="NP_601960.1">
    <property type="nucleotide sequence ID" value="NC_003450.3"/>
</dbReference>
<dbReference type="RefSeq" id="WP_011015361.1">
    <property type="nucleotide sequence ID" value="NC_006958.1"/>
</dbReference>
<dbReference type="SMR" id="Q8NM16"/>
<dbReference type="STRING" id="196627.cg3063"/>
<dbReference type="KEGG" id="cgb:cg3063"/>
<dbReference type="KEGG" id="cgl:Cgl2766"/>
<dbReference type="PATRIC" id="fig|196627.13.peg.2697"/>
<dbReference type="eggNOG" id="COG0104">
    <property type="taxonomic scope" value="Bacteria"/>
</dbReference>
<dbReference type="HOGENOM" id="CLU_029848_0_0_11"/>
<dbReference type="OrthoDB" id="9807553at2"/>
<dbReference type="BioCyc" id="CORYNE:G18NG-12383-MONOMER"/>
<dbReference type="UniPathway" id="UPA00075">
    <property type="reaction ID" value="UER00335"/>
</dbReference>
<dbReference type="Proteomes" id="UP000000582">
    <property type="component" value="Chromosome"/>
</dbReference>
<dbReference type="Proteomes" id="UP000001009">
    <property type="component" value="Chromosome"/>
</dbReference>
<dbReference type="GO" id="GO:0005737">
    <property type="term" value="C:cytoplasm"/>
    <property type="evidence" value="ECO:0007669"/>
    <property type="project" value="UniProtKB-SubCell"/>
</dbReference>
<dbReference type="GO" id="GO:0004019">
    <property type="term" value="F:adenylosuccinate synthase activity"/>
    <property type="evidence" value="ECO:0007669"/>
    <property type="project" value="UniProtKB-UniRule"/>
</dbReference>
<dbReference type="GO" id="GO:0005525">
    <property type="term" value="F:GTP binding"/>
    <property type="evidence" value="ECO:0007669"/>
    <property type="project" value="UniProtKB-UniRule"/>
</dbReference>
<dbReference type="GO" id="GO:0000287">
    <property type="term" value="F:magnesium ion binding"/>
    <property type="evidence" value="ECO:0007669"/>
    <property type="project" value="UniProtKB-UniRule"/>
</dbReference>
<dbReference type="GO" id="GO:0044208">
    <property type="term" value="P:'de novo' AMP biosynthetic process"/>
    <property type="evidence" value="ECO:0007669"/>
    <property type="project" value="UniProtKB-UniRule"/>
</dbReference>
<dbReference type="GO" id="GO:0046040">
    <property type="term" value="P:IMP metabolic process"/>
    <property type="evidence" value="ECO:0007669"/>
    <property type="project" value="TreeGrafter"/>
</dbReference>
<dbReference type="CDD" id="cd03108">
    <property type="entry name" value="AdSS"/>
    <property type="match status" value="1"/>
</dbReference>
<dbReference type="FunFam" id="1.10.300.10:FF:000001">
    <property type="entry name" value="Adenylosuccinate synthetase"/>
    <property type="match status" value="1"/>
</dbReference>
<dbReference type="FunFam" id="3.90.170.10:FF:000001">
    <property type="entry name" value="Adenylosuccinate synthetase"/>
    <property type="match status" value="1"/>
</dbReference>
<dbReference type="Gene3D" id="3.40.440.10">
    <property type="entry name" value="Adenylosuccinate Synthetase, subunit A, domain 1"/>
    <property type="match status" value="1"/>
</dbReference>
<dbReference type="Gene3D" id="1.10.300.10">
    <property type="entry name" value="Adenylosuccinate Synthetase, subunit A, domain 2"/>
    <property type="match status" value="1"/>
</dbReference>
<dbReference type="Gene3D" id="3.90.170.10">
    <property type="entry name" value="Adenylosuccinate Synthetase, subunit A, domain 3"/>
    <property type="match status" value="1"/>
</dbReference>
<dbReference type="HAMAP" id="MF_00011">
    <property type="entry name" value="Adenylosucc_synth"/>
    <property type="match status" value="1"/>
</dbReference>
<dbReference type="InterPro" id="IPR018220">
    <property type="entry name" value="Adenylosuccin_syn_GTP-bd"/>
</dbReference>
<dbReference type="InterPro" id="IPR033128">
    <property type="entry name" value="Adenylosuccin_syn_Lys_AS"/>
</dbReference>
<dbReference type="InterPro" id="IPR042109">
    <property type="entry name" value="Adenylosuccinate_synth_dom1"/>
</dbReference>
<dbReference type="InterPro" id="IPR042110">
    <property type="entry name" value="Adenylosuccinate_synth_dom2"/>
</dbReference>
<dbReference type="InterPro" id="IPR042111">
    <property type="entry name" value="Adenylosuccinate_synth_dom3"/>
</dbReference>
<dbReference type="InterPro" id="IPR001114">
    <property type="entry name" value="Adenylosuccinate_synthetase"/>
</dbReference>
<dbReference type="InterPro" id="IPR027417">
    <property type="entry name" value="P-loop_NTPase"/>
</dbReference>
<dbReference type="NCBIfam" id="NF002223">
    <property type="entry name" value="PRK01117.1"/>
    <property type="match status" value="1"/>
</dbReference>
<dbReference type="NCBIfam" id="TIGR00184">
    <property type="entry name" value="purA"/>
    <property type="match status" value="1"/>
</dbReference>
<dbReference type="PANTHER" id="PTHR11846">
    <property type="entry name" value="ADENYLOSUCCINATE SYNTHETASE"/>
    <property type="match status" value="1"/>
</dbReference>
<dbReference type="PANTHER" id="PTHR11846:SF0">
    <property type="entry name" value="ADENYLOSUCCINATE SYNTHETASE"/>
    <property type="match status" value="1"/>
</dbReference>
<dbReference type="Pfam" id="PF00709">
    <property type="entry name" value="Adenylsucc_synt"/>
    <property type="match status" value="1"/>
</dbReference>
<dbReference type="SMART" id="SM00788">
    <property type="entry name" value="Adenylsucc_synt"/>
    <property type="match status" value="1"/>
</dbReference>
<dbReference type="SUPFAM" id="SSF52540">
    <property type="entry name" value="P-loop containing nucleoside triphosphate hydrolases"/>
    <property type="match status" value="1"/>
</dbReference>
<dbReference type="PROSITE" id="PS01266">
    <property type="entry name" value="ADENYLOSUCCIN_SYN_1"/>
    <property type="match status" value="1"/>
</dbReference>
<dbReference type="PROSITE" id="PS00513">
    <property type="entry name" value="ADENYLOSUCCIN_SYN_2"/>
    <property type="match status" value="1"/>
</dbReference>
<accession>Q8NM16</accession>
<feature type="chain" id="PRO_0000095171" description="Adenylosuccinate synthetase">
    <location>
        <begin position="1"/>
        <end position="430"/>
    </location>
</feature>
<feature type="active site" description="Proton acceptor" evidence="1">
    <location>
        <position position="13"/>
    </location>
</feature>
<feature type="active site" description="Proton donor" evidence="1">
    <location>
        <position position="41"/>
    </location>
</feature>
<feature type="binding site" evidence="1">
    <location>
        <begin position="12"/>
        <end position="18"/>
    </location>
    <ligand>
        <name>GTP</name>
        <dbReference type="ChEBI" id="CHEBI:37565"/>
    </ligand>
</feature>
<feature type="binding site" description="in other chain" evidence="1">
    <location>
        <begin position="13"/>
        <end position="16"/>
    </location>
    <ligand>
        <name>IMP</name>
        <dbReference type="ChEBI" id="CHEBI:58053"/>
        <note>ligand shared between dimeric partners</note>
    </ligand>
</feature>
<feature type="binding site" evidence="1">
    <location>
        <position position="13"/>
    </location>
    <ligand>
        <name>Mg(2+)</name>
        <dbReference type="ChEBI" id="CHEBI:18420"/>
    </ligand>
</feature>
<feature type="binding site" description="in other chain" evidence="1">
    <location>
        <begin position="38"/>
        <end position="41"/>
    </location>
    <ligand>
        <name>IMP</name>
        <dbReference type="ChEBI" id="CHEBI:58053"/>
        <note>ligand shared between dimeric partners</note>
    </ligand>
</feature>
<feature type="binding site" evidence="1">
    <location>
        <begin position="40"/>
        <end position="42"/>
    </location>
    <ligand>
        <name>GTP</name>
        <dbReference type="ChEBI" id="CHEBI:37565"/>
    </ligand>
</feature>
<feature type="binding site" evidence="1">
    <location>
        <position position="40"/>
    </location>
    <ligand>
        <name>Mg(2+)</name>
        <dbReference type="ChEBI" id="CHEBI:18420"/>
    </ligand>
</feature>
<feature type="binding site" description="in other chain" evidence="1">
    <location>
        <position position="128"/>
    </location>
    <ligand>
        <name>IMP</name>
        <dbReference type="ChEBI" id="CHEBI:58053"/>
        <note>ligand shared between dimeric partners</note>
    </ligand>
</feature>
<feature type="binding site" evidence="1">
    <location>
        <position position="142"/>
    </location>
    <ligand>
        <name>IMP</name>
        <dbReference type="ChEBI" id="CHEBI:58053"/>
        <note>ligand shared between dimeric partners</note>
    </ligand>
</feature>
<feature type="binding site" description="in other chain" evidence="1">
    <location>
        <position position="223"/>
    </location>
    <ligand>
        <name>IMP</name>
        <dbReference type="ChEBI" id="CHEBI:58053"/>
        <note>ligand shared between dimeric partners</note>
    </ligand>
</feature>
<feature type="binding site" description="in other chain" evidence="1">
    <location>
        <position position="238"/>
    </location>
    <ligand>
        <name>IMP</name>
        <dbReference type="ChEBI" id="CHEBI:58053"/>
        <note>ligand shared between dimeric partners</note>
    </ligand>
</feature>
<feature type="binding site" evidence="1">
    <location>
        <begin position="298"/>
        <end position="304"/>
    </location>
    <ligand>
        <name>substrate</name>
    </ligand>
</feature>
<feature type="binding site" description="in other chain" evidence="1">
    <location>
        <position position="302"/>
    </location>
    <ligand>
        <name>IMP</name>
        <dbReference type="ChEBI" id="CHEBI:58053"/>
        <note>ligand shared between dimeric partners</note>
    </ligand>
</feature>
<feature type="binding site" evidence="1">
    <location>
        <position position="304"/>
    </location>
    <ligand>
        <name>GTP</name>
        <dbReference type="ChEBI" id="CHEBI:37565"/>
    </ligand>
</feature>
<feature type="binding site" evidence="1">
    <location>
        <begin position="330"/>
        <end position="332"/>
    </location>
    <ligand>
        <name>GTP</name>
        <dbReference type="ChEBI" id="CHEBI:37565"/>
    </ligand>
</feature>
<feature type="binding site" evidence="1">
    <location>
        <begin position="412"/>
        <end position="414"/>
    </location>
    <ligand>
        <name>GTP</name>
        <dbReference type="ChEBI" id="CHEBI:37565"/>
    </ligand>
</feature>
<gene>
    <name evidence="1" type="primary">purA</name>
    <name type="ordered locus">Cgl2766</name>
    <name type="ordered locus">cg3063</name>
</gene>
<sequence>MAAIVIVGAQWGDEGKGKATDILGGLVDYVVKPNGGNNAGHTVVVGGEKYELKLLPAGVLSETATPILGNGVVINLEALFEEIDGLEARGADASRLRISANAHLVAPYHQVMDRVQERFLGKRAIGTTGRGIGPTYADKVSRVGIRVQDIFDESILRQKVESALDYKNQVLVKMYNRKAIVAEEIVQYFLSYADRLRPMVIDATLVLNEALDQGKHVLMEGGQATMLDVDHGTYPFVTSSNPTAGGASVGSGIGPTKITSSLGIIKAYTTRVGAGPFPTELFDKWGEYLQTVGGEVGVNTGRKRRCGWYDSVIARYASRVNGFTDYFLTKLDVLTGIGEIPICVAYDVDGVRHDEMPLTQSEFHHATPIFETMPAWDEDITDCKTFEDLPQKAQDYVRRLEELSGARFSYIGVGPGRDQTIVLHDVLADN</sequence>
<keyword id="KW-0963">Cytoplasm</keyword>
<keyword id="KW-0342">GTP-binding</keyword>
<keyword id="KW-0436">Ligase</keyword>
<keyword id="KW-0460">Magnesium</keyword>
<keyword id="KW-0479">Metal-binding</keyword>
<keyword id="KW-0547">Nucleotide-binding</keyword>
<keyword id="KW-0658">Purine biosynthesis</keyword>
<keyword id="KW-1185">Reference proteome</keyword>
<organism>
    <name type="scientific">Corynebacterium glutamicum (strain ATCC 13032 / DSM 20300 / JCM 1318 / BCRC 11384 / CCUG 27702 / LMG 3730 / NBRC 12168 / NCIMB 10025 / NRRL B-2784 / 534)</name>
    <dbReference type="NCBI Taxonomy" id="196627"/>
    <lineage>
        <taxon>Bacteria</taxon>
        <taxon>Bacillati</taxon>
        <taxon>Actinomycetota</taxon>
        <taxon>Actinomycetes</taxon>
        <taxon>Mycobacteriales</taxon>
        <taxon>Corynebacteriaceae</taxon>
        <taxon>Corynebacterium</taxon>
    </lineage>
</organism>
<evidence type="ECO:0000255" key="1">
    <source>
        <dbReference type="HAMAP-Rule" id="MF_00011"/>
    </source>
</evidence>
<comment type="function">
    <text evidence="1">Plays an important role in the de novo pathway of purine nucleotide biosynthesis. Catalyzes the first committed step in the biosynthesis of AMP from IMP.</text>
</comment>
<comment type="catalytic activity">
    <reaction evidence="1">
        <text>IMP + L-aspartate + GTP = N(6)-(1,2-dicarboxyethyl)-AMP + GDP + phosphate + 2 H(+)</text>
        <dbReference type="Rhea" id="RHEA:15753"/>
        <dbReference type="ChEBI" id="CHEBI:15378"/>
        <dbReference type="ChEBI" id="CHEBI:29991"/>
        <dbReference type="ChEBI" id="CHEBI:37565"/>
        <dbReference type="ChEBI" id="CHEBI:43474"/>
        <dbReference type="ChEBI" id="CHEBI:57567"/>
        <dbReference type="ChEBI" id="CHEBI:58053"/>
        <dbReference type="ChEBI" id="CHEBI:58189"/>
        <dbReference type="EC" id="6.3.4.4"/>
    </reaction>
</comment>
<comment type="cofactor">
    <cofactor evidence="1">
        <name>Mg(2+)</name>
        <dbReference type="ChEBI" id="CHEBI:18420"/>
    </cofactor>
    <text evidence="1">Binds 1 Mg(2+) ion per subunit.</text>
</comment>
<comment type="pathway">
    <text evidence="1">Purine metabolism; AMP biosynthesis via de novo pathway; AMP from IMP: step 1/2.</text>
</comment>
<comment type="subunit">
    <text evidence="1">Homodimer.</text>
</comment>
<comment type="subcellular location">
    <subcellularLocation>
        <location evidence="1">Cytoplasm</location>
    </subcellularLocation>
</comment>
<comment type="similarity">
    <text evidence="1">Belongs to the adenylosuccinate synthetase family.</text>
</comment>
<reference key="1">
    <citation type="journal article" date="2003" name="Appl. Microbiol. Biotechnol.">
        <title>The Corynebacterium glutamicum genome: features and impacts on biotechnological processes.</title>
        <authorList>
            <person name="Ikeda M."/>
            <person name="Nakagawa S."/>
        </authorList>
    </citation>
    <scope>NUCLEOTIDE SEQUENCE [LARGE SCALE GENOMIC DNA]</scope>
    <source>
        <strain>ATCC 13032 / DSM 20300 / JCM 1318 / BCRC 11384 / CCUG 27702 / LMG 3730 / NBRC 12168 / NCIMB 10025 / NRRL B-2784 / 534</strain>
    </source>
</reference>
<reference key="2">
    <citation type="journal article" date="2003" name="J. Biotechnol.">
        <title>The complete Corynebacterium glutamicum ATCC 13032 genome sequence and its impact on the production of L-aspartate-derived amino acids and vitamins.</title>
        <authorList>
            <person name="Kalinowski J."/>
            <person name="Bathe B."/>
            <person name="Bartels D."/>
            <person name="Bischoff N."/>
            <person name="Bott M."/>
            <person name="Burkovski A."/>
            <person name="Dusch N."/>
            <person name="Eggeling L."/>
            <person name="Eikmanns B.J."/>
            <person name="Gaigalat L."/>
            <person name="Goesmann A."/>
            <person name="Hartmann M."/>
            <person name="Huthmacher K."/>
            <person name="Kraemer R."/>
            <person name="Linke B."/>
            <person name="McHardy A.C."/>
            <person name="Meyer F."/>
            <person name="Moeckel B."/>
            <person name="Pfefferle W."/>
            <person name="Puehler A."/>
            <person name="Rey D.A."/>
            <person name="Rueckert C."/>
            <person name="Rupp O."/>
            <person name="Sahm H."/>
            <person name="Wendisch V.F."/>
            <person name="Wiegraebe I."/>
            <person name="Tauch A."/>
        </authorList>
    </citation>
    <scope>NUCLEOTIDE SEQUENCE [LARGE SCALE GENOMIC DNA]</scope>
    <source>
        <strain>ATCC 13032 / DSM 20300 / JCM 1318 / BCRC 11384 / CCUG 27702 / LMG 3730 / NBRC 12168 / NCIMB 10025 / NRRL B-2784 / 534</strain>
    </source>
</reference>
<name>PURA_CORGL</name>
<proteinExistence type="inferred from homology"/>
<protein>
    <recommendedName>
        <fullName evidence="1">Adenylosuccinate synthetase</fullName>
        <shortName evidence="1">AMPSase</shortName>
        <shortName evidence="1">AdSS</shortName>
        <ecNumber evidence="1">6.3.4.4</ecNumber>
    </recommendedName>
    <alternativeName>
        <fullName evidence="1">IMP--aspartate ligase</fullName>
    </alternativeName>
</protein>